<feature type="chain" id="PRO_0000190944" description="Tetraacyldisaccharide 4'-kinase">
    <location>
        <begin position="1"/>
        <end position="321"/>
    </location>
</feature>
<feature type="binding site" evidence="1">
    <location>
        <begin position="54"/>
        <end position="61"/>
    </location>
    <ligand>
        <name>ATP</name>
        <dbReference type="ChEBI" id="CHEBI:30616"/>
    </ligand>
</feature>
<evidence type="ECO:0000255" key="1">
    <source>
        <dbReference type="HAMAP-Rule" id="MF_00409"/>
    </source>
</evidence>
<dbReference type="EC" id="2.7.1.130" evidence="1"/>
<dbReference type="EMBL" id="AE006914">
    <property type="protein sequence ID" value="AAL03630.1"/>
    <property type="molecule type" value="Genomic_DNA"/>
</dbReference>
<dbReference type="PIR" id="D97836">
    <property type="entry name" value="D97836"/>
</dbReference>
<dbReference type="RefSeq" id="WP_010977669.1">
    <property type="nucleotide sequence ID" value="NC_003103.1"/>
</dbReference>
<dbReference type="SMR" id="Q92GN1"/>
<dbReference type="GeneID" id="928241"/>
<dbReference type="KEGG" id="rco:RC1092"/>
<dbReference type="PATRIC" id="fig|272944.4.peg.1254"/>
<dbReference type="HOGENOM" id="CLU_038816_0_0_5"/>
<dbReference type="UniPathway" id="UPA00359">
    <property type="reaction ID" value="UER00482"/>
</dbReference>
<dbReference type="Proteomes" id="UP000000816">
    <property type="component" value="Chromosome"/>
</dbReference>
<dbReference type="GO" id="GO:0005886">
    <property type="term" value="C:plasma membrane"/>
    <property type="evidence" value="ECO:0007669"/>
    <property type="project" value="TreeGrafter"/>
</dbReference>
<dbReference type="GO" id="GO:0005524">
    <property type="term" value="F:ATP binding"/>
    <property type="evidence" value="ECO:0007669"/>
    <property type="project" value="UniProtKB-UniRule"/>
</dbReference>
<dbReference type="GO" id="GO:0009029">
    <property type="term" value="F:tetraacyldisaccharide 4'-kinase activity"/>
    <property type="evidence" value="ECO:0007669"/>
    <property type="project" value="UniProtKB-UniRule"/>
</dbReference>
<dbReference type="GO" id="GO:0009245">
    <property type="term" value="P:lipid A biosynthetic process"/>
    <property type="evidence" value="ECO:0007669"/>
    <property type="project" value="UniProtKB-UniRule"/>
</dbReference>
<dbReference type="GO" id="GO:0009244">
    <property type="term" value="P:lipopolysaccharide core region biosynthetic process"/>
    <property type="evidence" value="ECO:0007669"/>
    <property type="project" value="TreeGrafter"/>
</dbReference>
<dbReference type="HAMAP" id="MF_00409">
    <property type="entry name" value="LpxK"/>
    <property type="match status" value="1"/>
</dbReference>
<dbReference type="InterPro" id="IPR003758">
    <property type="entry name" value="LpxK"/>
</dbReference>
<dbReference type="InterPro" id="IPR027417">
    <property type="entry name" value="P-loop_NTPase"/>
</dbReference>
<dbReference type="NCBIfam" id="TIGR00682">
    <property type="entry name" value="lpxK"/>
    <property type="match status" value="1"/>
</dbReference>
<dbReference type="PANTHER" id="PTHR42724">
    <property type="entry name" value="TETRAACYLDISACCHARIDE 4'-KINASE"/>
    <property type="match status" value="1"/>
</dbReference>
<dbReference type="PANTHER" id="PTHR42724:SF1">
    <property type="entry name" value="TETRAACYLDISACCHARIDE 4'-KINASE, MITOCHONDRIAL-RELATED"/>
    <property type="match status" value="1"/>
</dbReference>
<dbReference type="Pfam" id="PF02606">
    <property type="entry name" value="LpxK"/>
    <property type="match status" value="1"/>
</dbReference>
<dbReference type="SUPFAM" id="SSF52540">
    <property type="entry name" value="P-loop containing nucleoside triphosphate hydrolases"/>
    <property type="match status" value="1"/>
</dbReference>
<keyword id="KW-0067">ATP-binding</keyword>
<keyword id="KW-0418">Kinase</keyword>
<keyword id="KW-0441">Lipid A biosynthesis</keyword>
<keyword id="KW-0444">Lipid biosynthesis</keyword>
<keyword id="KW-0443">Lipid metabolism</keyword>
<keyword id="KW-0547">Nucleotide-binding</keyword>
<keyword id="KW-0808">Transferase</keyword>
<accession>Q92GN1</accession>
<reference key="1">
    <citation type="journal article" date="2001" name="Science">
        <title>Mechanisms of evolution in Rickettsia conorii and R. prowazekii.</title>
        <authorList>
            <person name="Ogata H."/>
            <person name="Audic S."/>
            <person name="Renesto-Audiffren P."/>
            <person name="Fournier P.-E."/>
            <person name="Barbe V."/>
            <person name="Samson D."/>
            <person name="Roux V."/>
            <person name="Cossart P."/>
            <person name="Weissenbach J."/>
            <person name="Claverie J.-M."/>
            <person name="Raoult D."/>
        </authorList>
    </citation>
    <scope>NUCLEOTIDE SEQUENCE [LARGE SCALE GENOMIC DNA]</scope>
    <source>
        <strain>ATCC VR-613 / Malish 7</strain>
    </source>
</reference>
<name>LPXK_RICCN</name>
<sequence length="321" mass="36059">MIKLLYPEFWQKRNIIAYLLLPISVIYKFLGYLRASLARPIMLPAKVICVGNCSVGGTGKTQIVMYLAKLLKSRNVSFVIVTKAYGSNLKSATTIHQGHTALEVGDEGVILAKYGAVIATKNIKEIVPLLNELKPDIIIVDDFLQNPYFHKDFTIVSVDSQRLFGNGFLIPAGPLRQYPNKALDAADLIFLVSSHQDKIPNILTPYVNKLINAQIVPSNNIDKTKNYFAFSGIGNPERFFATLKNYGLNITGYKIFPDHYNYLQADLENLYSLAKEHNATLVTTRKDHVKFNDLNNNIVCLDVELSINHPDLLNEKIFKKA</sequence>
<protein>
    <recommendedName>
        <fullName evidence="1">Tetraacyldisaccharide 4'-kinase</fullName>
        <ecNumber evidence="1">2.7.1.130</ecNumber>
    </recommendedName>
    <alternativeName>
        <fullName evidence="1">Lipid A 4'-kinase</fullName>
    </alternativeName>
</protein>
<organism>
    <name type="scientific">Rickettsia conorii (strain ATCC VR-613 / Malish 7)</name>
    <dbReference type="NCBI Taxonomy" id="272944"/>
    <lineage>
        <taxon>Bacteria</taxon>
        <taxon>Pseudomonadati</taxon>
        <taxon>Pseudomonadota</taxon>
        <taxon>Alphaproteobacteria</taxon>
        <taxon>Rickettsiales</taxon>
        <taxon>Rickettsiaceae</taxon>
        <taxon>Rickettsieae</taxon>
        <taxon>Rickettsia</taxon>
        <taxon>spotted fever group</taxon>
    </lineage>
</organism>
<comment type="function">
    <text evidence="1">Transfers the gamma-phosphate of ATP to the 4'-position of a tetraacyldisaccharide 1-phosphate intermediate (termed DS-1-P) to form tetraacyldisaccharide 1,4'-bis-phosphate (lipid IVA).</text>
</comment>
<comment type="catalytic activity">
    <reaction evidence="1">
        <text>a lipid A disaccharide + ATP = a lipid IVA + ADP + H(+)</text>
        <dbReference type="Rhea" id="RHEA:67840"/>
        <dbReference type="ChEBI" id="CHEBI:15378"/>
        <dbReference type="ChEBI" id="CHEBI:30616"/>
        <dbReference type="ChEBI" id="CHEBI:176343"/>
        <dbReference type="ChEBI" id="CHEBI:176425"/>
        <dbReference type="ChEBI" id="CHEBI:456216"/>
        <dbReference type="EC" id="2.7.1.130"/>
    </reaction>
</comment>
<comment type="pathway">
    <text evidence="1">Glycolipid biosynthesis; lipid IV(A) biosynthesis; lipid IV(A) from (3R)-3-hydroxytetradecanoyl-[acyl-carrier-protein] and UDP-N-acetyl-alpha-D-glucosamine: step 6/6.</text>
</comment>
<comment type="similarity">
    <text evidence="1">Belongs to the LpxK family.</text>
</comment>
<gene>
    <name evidence="1" type="primary">lpxK</name>
    <name type="ordered locus">RC1092</name>
</gene>
<proteinExistence type="inferred from homology"/>